<feature type="chain" id="PRO_0000123064" description="Nucleoside triphosphate pyrophosphatase">
    <location>
        <begin position="1"/>
        <end position="193"/>
    </location>
</feature>
<feature type="active site" description="Proton acceptor" evidence="1">
    <location>
        <position position="69"/>
    </location>
</feature>
<reference key="1">
    <citation type="journal article" date="2003" name="Nature">
        <title>The genome of a motile marine Synechococcus.</title>
        <authorList>
            <person name="Palenik B."/>
            <person name="Brahamsha B."/>
            <person name="Larimer F.W."/>
            <person name="Land M.L."/>
            <person name="Hauser L."/>
            <person name="Chain P."/>
            <person name="Lamerdin J.E."/>
            <person name="Regala W."/>
            <person name="Allen E.E."/>
            <person name="McCarren J."/>
            <person name="Paulsen I.T."/>
            <person name="Dufresne A."/>
            <person name="Partensky F."/>
            <person name="Webb E.A."/>
            <person name="Waterbury J."/>
        </authorList>
    </citation>
    <scope>NUCLEOTIDE SEQUENCE [LARGE SCALE GENOMIC DNA]</scope>
    <source>
        <strain>WH8102</strain>
    </source>
</reference>
<evidence type="ECO:0000255" key="1">
    <source>
        <dbReference type="HAMAP-Rule" id="MF_00528"/>
    </source>
</evidence>
<name>NTPP_PARMW</name>
<comment type="function">
    <text evidence="1">Nucleoside triphosphate pyrophosphatase. May have a dual role in cell division arrest and in preventing the incorporation of modified nucleotides into cellular nucleic acids.</text>
</comment>
<comment type="catalytic activity">
    <reaction evidence="1">
        <text>a ribonucleoside 5'-triphosphate + H2O = a ribonucleoside 5'-phosphate + diphosphate + H(+)</text>
        <dbReference type="Rhea" id="RHEA:23996"/>
        <dbReference type="ChEBI" id="CHEBI:15377"/>
        <dbReference type="ChEBI" id="CHEBI:15378"/>
        <dbReference type="ChEBI" id="CHEBI:33019"/>
        <dbReference type="ChEBI" id="CHEBI:58043"/>
        <dbReference type="ChEBI" id="CHEBI:61557"/>
        <dbReference type="EC" id="3.6.1.9"/>
    </reaction>
</comment>
<comment type="catalytic activity">
    <reaction evidence="1">
        <text>a 2'-deoxyribonucleoside 5'-triphosphate + H2O = a 2'-deoxyribonucleoside 5'-phosphate + diphosphate + H(+)</text>
        <dbReference type="Rhea" id="RHEA:44644"/>
        <dbReference type="ChEBI" id="CHEBI:15377"/>
        <dbReference type="ChEBI" id="CHEBI:15378"/>
        <dbReference type="ChEBI" id="CHEBI:33019"/>
        <dbReference type="ChEBI" id="CHEBI:61560"/>
        <dbReference type="ChEBI" id="CHEBI:65317"/>
        <dbReference type="EC" id="3.6.1.9"/>
    </reaction>
</comment>
<comment type="cofactor">
    <cofactor evidence="1">
        <name>a divalent metal cation</name>
        <dbReference type="ChEBI" id="CHEBI:60240"/>
    </cofactor>
</comment>
<comment type="subcellular location">
    <subcellularLocation>
        <location evidence="1">Cytoplasm</location>
    </subcellularLocation>
</comment>
<comment type="similarity">
    <text evidence="1">Belongs to the Maf family.</text>
</comment>
<protein>
    <recommendedName>
        <fullName evidence="1">Nucleoside triphosphate pyrophosphatase</fullName>
        <ecNumber evidence="1">3.6.1.9</ecNumber>
    </recommendedName>
    <alternativeName>
        <fullName evidence="1">Nucleotide pyrophosphatase</fullName>
        <shortName evidence="1">Nucleotide PPase</shortName>
    </alternativeName>
</protein>
<dbReference type="EC" id="3.6.1.9" evidence="1"/>
<dbReference type="EMBL" id="BX569693">
    <property type="protein sequence ID" value="CAE08217.1"/>
    <property type="molecule type" value="Genomic_DNA"/>
</dbReference>
<dbReference type="RefSeq" id="WP_011128564.1">
    <property type="nucleotide sequence ID" value="NC_005070.1"/>
</dbReference>
<dbReference type="SMR" id="Q7U5K1"/>
<dbReference type="STRING" id="84588.SYNW1702"/>
<dbReference type="KEGG" id="syw:SYNW1702"/>
<dbReference type="eggNOG" id="COG0424">
    <property type="taxonomic scope" value="Bacteria"/>
</dbReference>
<dbReference type="HOGENOM" id="CLU_040416_1_2_3"/>
<dbReference type="Proteomes" id="UP000001422">
    <property type="component" value="Chromosome"/>
</dbReference>
<dbReference type="GO" id="GO:0005737">
    <property type="term" value="C:cytoplasm"/>
    <property type="evidence" value="ECO:0007669"/>
    <property type="project" value="UniProtKB-SubCell"/>
</dbReference>
<dbReference type="GO" id="GO:0047429">
    <property type="term" value="F:nucleoside triphosphate diphosphatase activity"/>
    <property type="evidence" value="ECO:0007669"/>
    <property type="project" value="UniProtKB-EC"/>
</dbReference>
<dbReference type="GO" id="GO:0009117">
    <property type="term" value="P:nucleotide metabolic process"/>
    <property type="evidence" value="ECO:0007669"/>
    <property type="project" value="UniProtKB-KW"/>
</dbReference>
<dbReference type="CDD" id="cd00555">
    <property type="entry name" value="Maf"/>
    <property type="match status" value="1"/>
</dbReference>
<dbReference type="Gene3D" id="3.90.950.10">
    <property type="match status" value="1"/>
</dbReference>
<dbReference type="HAMAP" id="MF_00528">
    <property type="entry name" value="Maf"/>
    <property type="match status" value="1"/>
</dbReference>
<dbReference type="InterPro" id="IPR029001">
    <property type="entry name" value="ITPase-like_fam"/>
</dbReference>
<dbReference type="InterPro" id="IPR003697">
    <property type="entry name" value="Maf-like"/>
</dbReference>
<dbReference type="NCBIfam" id="TIGR00172">
    <property type="entry name" value="maf"/>
    <property type="match status" value="1"/>
</dbReference>
<dbReference type="PANTHER" id="PTHR43213">
    <property type="entry name" value="BIFUNCTIONAL DTTP/UTP PYROPHOSPHATASE/METHYLTRANSFERASE PROTEIN-RELATED"/>
    <property type="match status" value="1"/>
</dbReference>
<dbReference type="PANTHER" id="PTHR43213:SF5">
    <property type="entry name" value="BIFUNCTIONAL DTTP_UTP PYROPHOSPHATASE_METHYLTRANSFERASE PROTEIN-RELATED"/>
    <property type="match status" value="1"/>
</dbReference>
<dbReference type="Pfam" id="PF02545">
    <property type="entry name" value="Maf"/>
    <property type="match status" value="1"/>
</dbReference>
<dbReference type="PIRSF" id="PIRSF006305">
    <property type="entry name" value="Maf"/>
    <property type="match status" value="1"/>
</dbReference>
<dbReference type="SUPFAM" id="SSF52972">
    <property type="entry name" value="ITPase-like"/>
    <property type="match status" value="1"/>
</dbReference>
<proteinExistence type="inferred from homology"/>
<sequence length="193" mass="20363">MLLLASASPARLRLLELAQIPHRVRVSGVDESSIENHDPALLVQQLALAKATAVSDGIDADISSVLGCDSLLLFEGEVFGKPQDGEEAAARWRRMAGGSGELLTGHALLVRSGENRLACISTRVHFAAITEEEIQAYVTTGEPLHCAGGFALEGRGASLIAGLEGCYSNVIGLSLPWLRSVLRDSKMDQSASG</sequence>
<organism>
    <name type="scientific">Parasynechococcus marenigrum (strain WH8102)</name>
    <dbReference type="NCBI Taxonomy" id="84588"/>
    <lineage>
        <taxon>Bacteria</taxon>
        <taxon>Bacillati</taxon>
        <taxon>Cyanobacteriota</taxon>
        <taxon>Cyanophyceae</taxon>
        <taxon>Synechococcales</taxon>
        <taxon>Prochlorococcaceae</taxon>
        <taxon>Parasynechococcus</taxon>
        <taxon>Parasynechococcus marenigrum</taxon>
    </lineage>
</organism>
<keyword id="KW-0963">Cytoplasm</keyword>
<keyword id="KW-0378">Hydrolase</keyword>
<keyword id="KW-0546">Nucleotide metabolism</keyword>
<accession>Q7U5K1</accession>
<gene>
    <name type="ordered locus">SYNW1702</name>
</gene>